<keyword id="KW-0012">Acyltransferase</keyword>
<keyword id="KW-1185">Reference proteome</keyword>
<keyword id="KW-0808">Transferase</keyword>
<comment type="function">
    <text evidence="1 4">Catalytic subunit of the N-terminal acetyltransferase A (NatA) complex which displays alpha (N-terminal) acetyltransferase activity (By similarity). Plays a role in regulating larval development, metabolism and longevity. Functions downstream or alongside daf-3, daf-12 and daf-16 in the dauer formation pathway. Functions upstream of daf-15 to enable animal development.</text>
</comment>
<comment type="catalytic activity">
    <reaction evidence="1">
        <text>N-terminal glycyl-[protein] + acetyl-CoA = N-terminal N(alpha)-acetylglycyl-[protein] + CoA + H(+)</text>
        <dbReference type="Rhea" id="RHEA:50496"/>
        <dbReference type="Rhea" id="RHEA-COMP:12666"/>
        <dbReference type="Rhea" id="RHEA-COMP:12700"/>
        <dbReference type="ChEBI" id="CHEBI:15378"/>
        <dbReference type="ChEBI" id="CHEBI:57287"/>
        <dbReference type="ChEBI" id="CHEBI:57288"/>
        <dbReference type="ChEBI" id="CHEBI:64723"/>
        <dbReference type="ChEBI" id="CHEBI:133369"/>
        <dbReference type="EC" id="2.3.1.255"/>
    </reaction>
</comment>
<comment type="catalytic activity">
    <reaction evidence="1">
        <text>N-terminal L-alanyl-[protein] + acetyl-CoA = N-terminal N(alpha)-acetyl-L-alanyl-[protein] + CoA + H(+)</text>
        <dbReference type="Rhea" id="RHEA:50500"/>
        <dbReference type="Rhea" id="RHEA-COMP:12701"/>
        <dbReference type="Rhea" id="RHEA-COMP:12702"/>
        <dbReference type="ChEBI" id="CHEBI:15378"/>
        <dbReference type="ChEBI" id="CHEBI:57287"/>
        <dbReference type="ChEBI" id="CHEBI:57288"/>
        <dbReference type="ChEBI" id="CHEBI:64718"/>
        <dbReference type="ChEBI" id="CHEBI:83683"/>
        <dbReference type="EC" id="2.3.1.255"/>
    </reaction>
</comment>
<comment type="catalytic activity">
    <reaction evidence="1">
        <text>N-terminal L-seryl-[protein] + acetyl-CoA = N-terminal N(alpha)-acetyl-L-seryl-[protein] + CoA + H(+)</text>
        <dbReference type="Rhea" id="RHEA:50504"/>
        <dbReference type="Rhea" id="RHEA-COMP:12703"/>
        <dbReference type="Rhea" id="RHEA-COMP:12704"/>
        <dbReference type="ChEBI" id="CHEBI:15378"/>
        <dbReference type="ChEBI" id="CHEBI:57287"/>
        <dbReference type="ChEBI" id="CHEBI:57288"/>
        <dbReference type="ChEBI" id="CHEBI:64738"/>
        <dbReference type="ChEBI" id="CHEBI:83690"/>
        <dbReference type="EC" id="2.3.1.255"/>
    </reaction>
</comment>
<comment type="catalytic activity">
    <reaction evidence="1">
        <text>N-terminal L-valyl-[protein] + acetyl-CoA = N-terminal N(alpha)-acetyl-L-valyl-[protein] + CoA + H(+)</text>
        <dbReference type="Rhea" id="RHEA:50508"/>
        <dbReference type="Rhea" id="RHEA-COMP:12705"/>
        <dbReference type="Rhea" id="RHEA-COMP:12706"/>
        <dbReference type="ChEBI" id="CHEBI:15378"/>
        <dbReference type="ChEBI" id="CHEBI:57287"/>
        <dbReference type="ChEBI" id="CHEBI:57288"/>
        <dbReference type="ChEBI" id="CHEBI:64741"/>
        <dbReference type="ChEBI" id="CHEBI:133371"/>
        <dbReference type="EC" id="2.3.1.255"/>
    </reaction>
</comment>
<comment type="catalytic activity">
    <reaction evidence="1">
        <text>N-terminal L-cysteinyl-[protein] + acetyl-CoA = N-terminal N(alpha)-acetyl-L-cysteinyl-[protein] + CoA + H(+)</text>
        <dbReference type="Rhea" id="RHEA:50512"/>
        <dbReference type="Rhea" id="RHEA-COMP:12707"/>
        <dbReference type="Rhea" id="RHEA-COMP:12708"/>
        <dbReference type="ChEBI" id="CHEBI:15378"/>
        <dbReference type="ChEBI" id="CHEBI:57287"/>
        <dbReference type="ChEBI" id="CHEBI:57288"/>
        <dbReference type="ChEBI" id="CHEBI:65250"/>
        <dbReference type="ChEBI" id="CHEBI:133372"/>
        <dbReference type="EC" id="2.3.1.255"/>
    </reaction>
</comment>
<comment type="catalytic activity">
    <reaction evidence="1">
        <text>N-terminal L-threonyl-[protein] + acetyl-CoA = N-terminal N(alpha)-acetyl-L-threonyl-[protein] + CoA + H(+)</text>
        <dbReference type="Rhea" id="RHEA:50516"/>
        <dbReference type="Rhea" id="RHEA-COMP:12709"/>
        <dbReference type="Rhea" id="RHEA-COMP:12710"/>
        <dbReference type="ChEBI" id="CHEBI:15378"/>
        <dbReference type="ChEBI" id="CHEBI:57287"/>
        <dbReference type="ChEBI" id="CHEBI:57288"/>
        <dbReference type="ChEBI" id="CHEBI:64739"/>
        <dbReference type="ChEBI" id="CHEBI:133375"/>
        <dbReference type="EC" id="2.3.1.255"/>
    </reaction>
</comment>
<comment type="subunit">
    <text evidence="1">Component of the N-terminal acetyltransferase A (NatA) complex.</text>
</comment>
<comment type="tissue specificity">
    <text evidence="4">Expressed in head and tail hypodermal cells, hypodermal seam cells, pharynx, intestine and head and tail neurons.</text>
</comment>
<comment type="developmental stage">
    <text evidence="4">Expressed from larval stage L1 to adulthood.</text>
</comment>
<comment type="disruption phenotype">
    <text evidence="4">The majority of animals die within five days following dauer-like arrest, but surviving animals grow to the L4 larval developmental stage or adulthood. Animals display a dauer-like phenotype in response to pheromone and starvation, form dauer alae and have a constricted pharynx. Unlike dauer defective animals, these animals are not temperature sensitive and do not complete dauer morphogenesis. Animals have an increased propensity to accumulate fat. RNAi-mediated knock-down also induces a dauer-like phenotype and fat accumulation. However, knock-down does not influence the lifespan of animals.</text>
</comment>
<comment type="similarity">
    <text evidence="5">Belongs to the acetyltransferase family. ARD1 subfamily.</text>
</comment>
<evidence type="ECO:0000250" key="1">
    <source>
        <dbReference type="UniProtKB" id="P41227"/>
    </source>
</evidence>
<evidence type="ECO:0000255" key="2">
    <source>
        <dbReference type="PROSITE-ProRule" id="PRU00532"/>
    </source>
</evidence>
<evidence type="ECO:0000256" key="3">
    <source>
        <dbReference type="SAM" id="MobiDB-lite"/>
    </source>
</evidence>
<evidence type="ECO:0000269" key="4">
    <source>
    </source>
</evidence>
<evidence type="ECO:0000305" key="5"/>
<evidence type="ECO:0000312" key="6">
    <source>
        <dbReference type="Proteomes" id="UP000001940"/>
    </source>
</evidence>
<evidence type="ECO:0000312" key="7">
    <source>
        <dbReference type="WormBase" id="K07H8.3"/>
    </source>
</evidence>
<protein>
    <recommendedName>
        <fullName evidence="5">N-alpha-acetyltransferase daf-31</fullName>
        <ecNumber evidence="1">2.3.1.255</ecNumber>
    </recommendedName>
    <alternativeName>
        <fullName evidence="7">Abnormal dauer formation protein 31</fullName>
    </alternativeName>
</protein>
<accession>O61219</accession>
<name>DAF31_CAEEL</name>
<reference key="1">
    <citation type="journal article" date="1998" name="Science">
        <title>Genome sequence of the nematode C. elegans: a platform for investigating biology.</title>
        <authorList>
            <consortium name="The C. elegans sequencing consortium"/>
        </authorList>
    </citation>
    <scope>NUCLEOTIDE SEQUENCE [LARGE SCALE GENOMIC DNA]</scope>
    <source>
        <strain evidence="6">Bristol N2</strain>
    </source>
</reference>
<reference key="2">
    <citation type="journal article" date="2014" name="PLoS Genet.">
        <title>daf-31 encodes the catalytic subunit of N alpha-acetyltransferase that regulates Caenorhabditis elegans development, metabolism and adult lifespan.</title>
        <authorList>
            <person name="Chen D."/>
            <person name="Zhang J."/>
            <person name="Minnerly J."/>
            <person name="Kaul T."/>
            <person name="Riddle D.L."/>
            <person name="Jia K."/>
        </authorList>
    </citation>
    <scope>FUNCTION</scope>
    <scope>TISSUE SPECIFICITY</scope>
    <scope>DEVELOPMENTAL STAGE</scope>
    <scope>DISRUPTION PHENOTYPE</scope>
</reference>
<sequence>MNIRCARVDDLMSMQNANLMCLPENYQMKYYFYHALSWPQLSYIAEDHKGNVVGYVLAKMEEDPGEEPHGHITSLAVKRSYRRLGLANKMMDQTARAMVETYNAKYVSLHVRVSNRAALNLYKNTLKFEIVDTEPKYYADGEDAYAMRRDLAKWAEERNIEPADREAYTTAKTTDDKKKNRS</sequence>
<gene>
    <name evidence="7" type="primary">daf-31</name>
    <name evidence="7" type="ORF">K07H8.3</name>
</gene>
<organism evidence="6">
    <name type="scientific">Caenorhabditis elegans</name>
    <dbReference type="NCBI Taxonomy" id="6239"/>
    <lineage>
        <taxon>Eukaryota</taxon>
        <taxon>Metazoa</taxon>
        <taxon>Ecdysozoa</taxon>
        <taxon>Nematoda</taxon>
        <taxon>Chromadorea</taxon>
        <taxon>Rhabditida</taxon>
        <taxon>Rhabditina</taxon>
        <taxon>Rhabditomorpha</taxon>
        <taxon>Rhabditoidea</taxon>
        <taxon>Rhabditidae</taxon>
        <taxon>Peloderinae</taxon>
        <taxon>Caenorhabditis</taxon>
    </lineage>
</organism>
<dbReference type="EC" id="2.3.1.255" evidence="1"/>
<dbReference type="EMBL" id="FO081300">
    <property type="protein sequence ID" value="CCD70602.1"/>
    <property type="molecule type" value="Genomic_DNA"/>
</dbReference>
<dbReference type="PIR" id="T33023">
    <property type="entry name" value="T33023"/>
</dbReference>
<dbReference type="RefSeq" id="NP_501392.1">
    <property type="nucleotide sequence ID" value="NM_068991.7"/>
</dbReference>
<dbReference type="SMR" id="O61219"/>
<dbReference type="FunCoup" id="O61219">
    <property type="interactions" value="1772"/>
</dbReference>
<dbReference type="STRING" id="6239.K07H8.3.1"/>
<dbReference type="PaxDb" id="6239-K07H8.3"/>
<dbReference type="PeptideAtlas" id="O61219"/>
<dbReference type="EnsemblMetazoa" id="K07H8.3.1">
    <property type="protein sequence ID" value="K07H8.3.1"/>
    <property type="gene ID" value="WBGene00000923"/>
</dbReference>
<dbReference type="GeneID" id="177622"/>
<dbReference type="KEGG" id="cel:CELE_K07H8.3"/>
<dbReference type="UCSC" id="K07H8.3">
    <property type="organism name" value="c. elegans"/>
</dbReference>
<dbReference type="AGR" id="WB:WBGene00000923"/>
<dbReference type="CTD" id="177622"/>
<dbReference type="WormBase" id="K07H8.3">
    <property type="protein sequence ID" value="CE18023"/>
    <property type="gene ID" value="WBGene00000923"/>
    <property type="gene designation" value="daf-31"/>
</dbReference>
<dbReference type="eggNOG" id="KOG3235">
    <property type="taxonomic scope" value="Eukaryota"/>
</dbReference>
<dbReference type="GeneTree" id="ENSGT00940000174781"/>
<dbReference type="HOGENOM" id="CLU_013985_7_2_1"/>
<dbReference type="InParanoid" id="O61219"/>
<dbReference type="OMA" id="MSMQNAN"/>
<dbReference type="OrthoDB" id="25586at2759"/>
<dbReference type="PhylomeDB" id="O61219"/>
<dbReference type="BRENDA" id="2.3.1.255">
    <property type="organism ID" value="1045"/>
</dbReference>
<dbReference type="PRO" id="PR:O61219"/>
<dbReference type="Proteomes" id="UP000001940">
    <property type="component" value="Chromosome IV"/>
</dbReference>
<dbReference type="Bgee" id="WBGene00000923">
    <property type="expression patterns" value="Expressed in germ line (C elegans) and 4 other cell types or tissues"/>
</dbReference>
<dbReference type="GO" id="GO:0031415">
    <property type="term" value="C:NatA complex"/>
    <property type="evidence" value="ECO:0000250"/>
    <property type="project" value="WormBase"/>
</dbReference>
<dbReference type="GO" id="GO:1990189">
    <property type="term" value="F:protein N-terminal-serine acetyltransferase activity"/>
    <property type="evidence" value="ECO:0000318"/>
    <property type="project" value="GO_Central"/>
</dbReference>
<dbReference type="GO" id="GO:0004596">
    <property type="term" value="F:protein-N-terminal amino-acid acetyltransferase activity"/>
    <property type="evidence" value="ECO:0000250"/>
    <property type="project" value="WormBase"/>
</dbReference>
<dbReference type="GO" id="GO:0008999">
    <property type="term" value="F:protein-N-terminal-alanine acetyltransferase activity"/>
    <property type="evidence" value="ECO:0007669"/>
    <property type="project" value="RHEA"/>
</dbReference>
<dbReference type="GO" id="GO:1990190">
    <property type="term" value="F:protein-N-terminal-glutamate acetyltransferase activity"/>
    <property type="evidence" value="ECO:0000318"/>
    <property type="project" value="GO_Central"/>
</dbReference>
<dbReference type="GO" id="GO:0043054">
    <property type="term" value="P:dauer exit"/>
    <property type="evidence" value="ECO:0000315"/>
    <property type="project" value="WormBase"/>
</dbReference>
<dbReference type="GO" id="GO:0040024">
    <property type="term" value="P:dauer larval development"/>
    <property type="evidence" value="ECO:0000315"/>
    <property type="project" value="WormBase"/>
</dbReference>
<dbReference type="GO" id="GO:0008340">
    <property type="term" value="P:determination of adult lifespan"/>
    <property type="evidence" value="ECO:0000316"/>
    <property type="project" value="WormBase"/>
</dbReference>
<dbReference type="GO" id="GO:0048609">
    <property type="term" value="P:multicellular organismal reproductive process"/>
    <property type="evidence" value="ECO:0000315"/>
    <property type="project" value="WormBase"/>
</dbReference>
<dbReference type="GO" id="GO:0002119">
    <property type="term" value="P:nematode larval development"/>
    <property type="evidence" value="ECO:0000315"/>
    <property type="project" value="WormBase"/>
</dbReference>
<dbReference type="CDD" id="cd04301">
    <property type="entry name" value="NAT_SF"/>
    <property type="match status" value="1"/>
</dbReference>
<dbReference type="FunFam" id="3.40.630.30:FF:000101">
    <property type="entry name" value="N-alpha-acetyltransferase 10"/>
    <property type="match status" value="1"/>
</dbReference>
<dbReference type="Gene3D" id="3.40.630.30">
    <property type="match status" value="1"/>
</dbReference>
<dbReference type="InterPro" id="IPR016181">
    <property type="entry name" value="Acyl_CoA_acyltransferase"/>
</dbReference>
<dbReference type="InterPro" id="IPR045047">
    <property type="entry name" value="Ard1-like"/>
</dbReference>
<dbReference type="InterPro" id="IPR000182">
    <property type="entry name" value="GNAT_dom"/>
</dbReference>
<dbReference type="PANTHER" id="PTHR23091">
    <property type="entry name" value="N-TERMINAL ACETYLTRANSFERASE"/>
    <property type="match status" value="1"/>
</dbReference>
<dbReference type="PANTHER" id="PTHR23091:SF4">
    <property type="entry name" value="N-TERMINAL AMINO-ACID N(ALPHA)-ACETYLTRANSFERASE NATA"/>
    <property type="match status" value="1"/>
</dbReference>
<dbReference type="Pfam" id="PF00583">
    <property type="entry name" value="Acetyltransf_1"/>
    <property type="match status" value="1"/>
</dbReference>
<dbReference type="SUPFAM" id="SSF55729">
    <property type="entry name" value="Acyl-CoA N-acyltransferases (Nat)"/>
    <property type="match status" value="1"/>
</dbReference>
<dbReference type="PROSITE" id="PS51186">
    <property type="entry name" value="GNAT"/>
    <property type="match status" value="1"/>
</dbReference>
<feature type="chain" id="PRO_0000432622" description="N-alpha-acetyltransferase daf-31">
    <location>
        <begin position="1"/>
        <end position="182"/>
    </location>
</feature>
<feature type="domain" description="N-acetyltransferase" evidence="2">
    <location>
        <begin position="1"/>
        <end position="152"/>
    </location>
</feature>
<feature type="region of interest" description="Disordered" evidence="3">
    <location>
        <begin position="162"/>
        <end position="182"/>
    </location>
</feature>
<proteinExistence type="evidence at transcript level"/>